<feature type="chain" id="PRO_0000155863" description="Ribonuclease BN">
    <location>
        <begin position="1"/>
        <end position="305"/>
    </location>
</feature>
<feature type="active site" description="Proton acceptor" evidence="1">
    <location>
        <position position="68"/>
    </location>
</feature>
<feature type="binding site" evidence="1 4">
    <location>
        <position position="64"/>
    </location>
    <ligand>
        <name>Zn(2+)</name>
        <dbReference type="ChEBI" id="CHEBI:29105"/>
        <label>1</label>
        <note>catalytic</note>
    </ligand>
</feature>
<feature type="binding site" evidence="1 4">
    <location>
        <position position="66"/>
    </location>
    <ligand>
        <name>Zn(2+)</name>
        <dbReference type="ChEBI" id="CHEBI:29105"/>
        <label>1</label>
        <note>catalytic</note>
    </ligand>
</feature>
<feature type="binding site" evidence="1 4">
    <location>
        <position position="68"/>
    </location>
    <ligand>
        <name>Zn(2+)</name>
        <dbReference type="ChEBI" id="CHEBI:29105"/>
        <label>2</label>
        <note>catalytic</note>
    </ligand>
</feature>
<feature type="binding site" evidence="1 4">
    <location>
        <position position="69"/>
    </location>
    <ligand>
        <name>Zn(2+)</name>
        <dbReference type="ChEBI" id="CHEBI:29105"/>
        <label>2</label>
        <note>catalytic</note>
    </ligand>
</feature>
<feature type="binding site" evidence="1 4">
    <location>
        <position position="141"/>
    </location>
    <ligand>
        <name>Zn(2+)</name>
        <dbReference type="ChEBI" id="CHEBI:29105"/>
        <label>1</label>
        <note>catalytic</note>
    </ligand>
</feature>
<feature type="binding site" evidence="1 4">
    <location>
        <position position="212"/>
    </location>
    <ligand>
        <name>Zn(2+)</name>
        <dbReference type="ChEBI" id="CHEBI:29105"/>
        <label>1</label>
        <note>catalytic</note>
    </ligand>
</feature>
<feature type="binding site" evidence="1 4">
    <location>
        <position position="212"/>
    </location>
    <ligand>
        <name>Zn(2+)</name>
        <dbReference type="ChEBI" id="CHEBI:29105"/>
        <label>2</label>
        <note>catalytic</note>
    </ligand>
</feature>
<feature type="binding site" evidence="1 4">
    <location>
        <position position="270"/>
    </location>
    <ligand>
        <name>Zn(2+)</name>
        <dbReference type="ChEBI" id="CHEBI:29105"/>
        <label>2</label>
        <note>catalytic</note>
    </ligand>
</feature>
<feature type="sequence conflict" description="In Ref. 1; AAB02732." evidence="8" ref="1">
    <original>D</original>
    <variation>Y</variation>
    <location>
        <position position="154"/>
    </location>
</feature>
<feature type="sequence conflict" description="In Ref. 1; AAB02732." evidence="8" ref="1">
    <original>D</original>
    <variation>N</variation>
    <location>
        <position position="217"/>
    </location>
</feature>
<feature type="strand" evidence="9">
    <location>
        <begin position="2"/>
        <end position="7"/>
    </location>
</feature>
<feature type="strand" evidence="9">
    <location>
        <begin position="9"/>
        <end position="12"/>
    </location>
</feature>
<feature type="strand" evidence="9">
    <location>
        <begin position="21"/>
        <end position="25"/>
    </location>
</feature>
<feature type="strand" evidence="9">
    <location>
        <begin position="34"/>
        <end position="37"/>
    </location>
</feature>
<feature type="helix" evidence="9">
    <location>
        <begin position="43"/>
        <end position="48"/>
    </location>
</feature>
<feature type="turn" evidence="9">
    <location>
        <begin position="54"/>
        <end position="56"/>
    </location>
</feature>
<feature type="strand" evidence="9">
    <location>
        <begin position="57"/>
        <end position="61"/>
    </location>
</feature>
<feature type="helix" evidence="9">
    <location>
        <begin position="67"/>
        <end position="70"/>
    </location>
</feature>
<feature type="helix" evidence="9">
    <location>
        <begin position="73"/>
        <end position="82"/>
    </location>
</feature>
<feature type="strand" evidence="9">
    <location>
        <begin position="89"/>
        <end position="94"/>
    </location>
</feature>
<feature type="helix" evidence="9">
    <location>
        <begin position="97"/>
        <end position="107"/>
    </location>
</feature>
<feature type="strand" evidence="9">
    <location>
        <begin position="116"/>
        <end position="120"/>
    </location>
</feature>
<feature type="strand" evidence="9">
    <location>
        <begin position="123"/>
        <end position="128"/>
    </location>
</feature>
<feature type="strand" evidence="9">
    <location>
        <begin position="130"/>
        <end position="138"/>
    </location>
</feature>
<feature type="strand" evidence="9">
    <location>
        <begin position="140"/>
        <end position="143"/>
    </location>
</feature>
<feature type="strand" evidence="9">
    <location>
        <begin position="146"/>
        <end position="152"/>
    </location>
</feature>
<feature type="helix" evidence="9">
    <location>
        <begin position="161"/>
        <end position="166"/>
    </location>
</feature>
<feature type="helix" evidence="9">
    <location>
        <begin position="173"/>
        <end position="180"/>
    </location>
</feature>
<feature type="turn" evidence="9">
    <location>
        <begin position="187"/>
        <end position="189"/>
    </location>
</feature>
<feature type="helix" evidence="9">
    <location>
        <begin position="194"/>
        <end position="196"/>
    </location>
</feature>
<feature type="strand" evidence="9">
    <location>
        <begin position="206"/>
        <end position="209"/>
    </location>
</feature>
<feature type="helix" evidence="9">
    <location>
        <begin position="219"/>
        <end position="223"/>
    </location>
</feature>
<feature type="strand" evidence="9">
    <location>
        <begin position="227"/>
        <end position="232"/>
    </location>
</feature>
<feature type="helix" evidence="9">
    <location>
        <begin position="237"/>
        <end position="239"/>
    </location>
</feature>
<feature type="helix" evidence="9">
    <location>
        <begin position="240"/>
        <end position="245"/>
    </location>
</feature>
<feature type="helix" evidence="9">
    <location>
        <begin position="251"/>
        <end position="261"/>
    </location>
</feature>
<feature type="strand" evidence="9">
    <location>
        <begin position="264"/>
        <end position="269"/>
    </location>
</feature>
<feature type="helix" evidence="9">
    <location>
        <begin position="277"/>
        <end position="288"/>
    </location>
</feature>
<feature type="strand" evidence="9">
    <location>
        <begin position="294"/>
        <end position="296"/>
    </location>
</feature>
<feature type="strand" evidence="9">
    <location>
        <begin position="302"/>
        <end position="304"/>
    </location>
</feature>
<sequence>MELIFLGTSAGVPTRTRNVTAILLNLQHPTQSGLWLFDCGEGTQHQLLHTAFNPGKLDKIFISHLHGDHLFGLPGLLCSRSMSGIIQPLTIYGPQGIREFVETALRISGSWTDYPLEIVEIGAGEILDDGLRKVTAYPLEHPLECYGYRIEEHDKPGALNAQALKAAGVPPGPLFQELKAGKTITLEDGRQINGADYLAAPVPGKALAIFGDTGPCDAALDLAKGVDVMVHEATLDITMEAKANSRGHSSTRQAATLAREAGVGKLIITHVSSRYDDKGCQHLLRECRSIFPATELANDFTVFNV</sequence>
<gene>
    <name type="primary">rbn</name>
    <name type="synonym">elaC</name>
    <name type="synonym">rnz</name>
    <name type="ordered locus">b2268</name>
    <name type="ordered locus">JW2263</name>
</gene>
<reference key="1">
    <citation type="submission" date="1996-06" db="EMBL/GenBank/DDBJ databases">
        <authorList>
            <person name="Huisman G.W."/>
        </authorList>
    </citation>
    <scope>NUCLEOTIDE SEQUENCE [GENOMIC DNA]</scope>
    <source>
        <strain>K12</strain>
    </source>
</reference>
<reference key="2">
    <citation type="journal article" date="1997" name="DNA Res.">
        <title>Construction of a contiguous 874-kb sequence of the Escherichia coli-K12 genome corresponding to 50.0-68.8 min on the linkage map and analysis of its sequence features.</title>
        <authorList>
            <person name="Yamamoto Y."/>
            <person name="Aiba H."/>
            <person name="Baba T."/>
            <person name="Hayashi K."/>
            <person name="Inada T."/>
            <person name="Isono K."/>
            <person name="Itoh T."/>
            <person name="Kimura S."/>
            <person name="Kitagawa M."/>
            <person name="Makino K."/>
            <person name="Miki T."/>
            <person name="Mitsuhashi N."/>
            <person name="Mizobuchi K."/>
            <person name="Mori H."/>
            <person name="Nakade S."/>
            <person name="Nakamura Y."/>
            <person name="Nashimoto H."/>
            <person name="Oshima T."/>
            <person name="Oyama S."/>
            <person name="Saito N."/>
            <person name="Sampei G."/>
            <person name="Satoh Y."/>
            <person name="Sivasundaram S."/>
            <person name="Tagami H."/>
            <person name="Takahashi H."/>
            <person name="Takeda J."/>
            <person name="Takemoto K."/>
            <person name="Uehara K."/>
            <person name="Wada C."/>
            <person name="Yamagata S."/>
            <person name="Horiuchi T."/>
        </authorList>
    </citation>
    <scope>NUCLEOTIDE SEQUENCE [LARGE SCALE GENOMIC DNA]</scope>
    <source>
        <strain>K12 / W3110 / ATCC 27325 / DSM 5911</strain>
    </source>
</reference>
<reference key="3">
    <citation type="journal article" date="1997" name="Science">
        <title>The complete genome sequence of Escherichia coli K-12.</title>
        <authorList>
            <person name="Blattner F.R."/>
            <person name="Plunkett G. III"/>
            <person name="Bloch C.A."/>
            <person name="Perna N.T."/>
            <person name="Burland V."/>
            <person name="Riley M."/>
            <person name="Collado-Vides J."/>
            <person name="Glasner J.D."/>
            <person name="Rode C.K."/>
            <person name="Mayhew G.F."/>
            <person name="Gregor J."/>
            <person name="Davis N.W."/>
            <person name="Kirkpatrick H.A."/>
            <person name="Goeden M.A."/>
            <person name="Rose D.J."/>
            <person name="Mau B."/>
            <person name="Shao Y."/>
        </authorList>
    </citation>
    <scope>NUCLEOTIDE SEQUENCE [LARGE SCALE GENOMIC DNA]</scope>
    <source>
        <strain>K12 / MG1655 / ATCC 47076</strain>
    </source>
</reference>
<reference key="4">
    <citation type="journal article" date="2006" name="Mol. Syst. Biol.">
        <title>Highly accurate genome sequences of Escherichia coli K-12 strains MG1655 and W3110.</title>
        <authorList>
            <person name="Hayashi K."/>
            <person name="Morooka N."/>
            <person name="Yamamoto Y."/>
            <person name="Fujita K."/>
            <person name="Isono K."/>
            <person name="Choi S."/>
            <person name="Ohtsubo E."/>
            <person name="Baba T."/>
            <person name="Wanner B.L."/>
            <person name="Mori H."/>
            <person name="Horiuchi T."/>
        </authorList>
    </citation>
    <scope>NUCLEOTIDE SEQUENCE [LARGE SCALE GENOMIC DNA]</scope>
    <source>
        <strain>K12 / W3110 / ATCC 27325 / DSM 5911</strain>
    </source>
</reference>
<reference key="5">
    <citation type="journal article" date="2002" name="J. Biol. Chem.">
        <title>ElaC encodes a novel binuclear zinc phosphodiesterase.</title>
        <authorList>
            <person name="Vogel A."/>
            <person name="Schilling O."/>
            <person name="Niecke M."/>
            <person name="Bettmer J."/>
            <person name="Meyer-Klaucke W."/>
        </authorList>
    </citation>
    <scope>FUNCTION</scope>
    <scope>DIMERIZATION</scope>
    <scope>COFACTOR</scope>
    <source>
        <strain>K12 / DH5-alpha</strain>
    </source>
</reference>
<reference key="6">
    <citation type="journal article" date="2005" name="J. Biol. Chem.">
        <title>The RNase Z homologue encoded by Escherichia coli elaC gene is RNase BN.</title>
        <authorList>
            <person name="Ezraty B."/>
            <person name="Dahlgren B."/>
            <person name="Deutscher M.P."/>
        </authorList>
    </citation>
    <scope>IDENTIFICATION AS RNASE BN</scope>
    <scope>FUNCTION</scope>
    <scope>ACTIVITY REGULATION</scope>
    <scope>SUBUNIT</scope>
    <scope>DISRUPTION PHENOTYPE</scope>
    <source>
        <strain>K12</strain>
    </source>
</reference>
<reference key="7">
    <citation type="journal article" date="2006" name="Mol. Microbiol.">
        <title>RNase Z in Escherichia coli plays a significant role in mRNA decay.</title>
        <authorList>
            <person name="Perwez T."/>
            <person name="Kushner S.R."/>
        </authorList>
    </citation>
    <scope>FUNCTION IN MRNA DECAY</scope>
    <source>
        <strain>K12</strain>
    </source>
</reference>
<reference key="8">
    <citation type="journal article" date="2009" name="J. Biol. Chem.">
        <title>Catalytic properties of RNase BN/RNase Z from Escherichia coli: RNase BN is both an exo- and endoribonuclease.</title>
        <authorList>
            <person name="Dutta T."/>
            <person name="Deutscher M.P."/>
        </authorList>
    </citation>
    <scope>FUNCTION</scope>
    <scope>ACTIVITY REGULATION</scope>
</reference>
<reference key="9">
    <citation type="journal article" date="2010" name="J. Biol. Chem.">
        <title>Mode of action of RNase BN/RNase Z on tRNA precursors: RNase BN does not remove the CCA sequence from tRNA.</title>
        <authorList>
            <person name="Dutta T."/>
            <person name="Deutscher M.P."/>
        </authorList>
    </citation>
    <scope>FUNCTION</scope>
    <scope>ACTIVITY REGULATION</scope>
</reference>
<reference key="10">
    <citation type="journal article" date="2006" name="J. Bacteriol.">
        <title>The crystal structure of the zinc phosphodiesterase from Escherichia coli provides insight into function and cooperativity of tRNase Z-family proteins.</title>
        <authorList>
            <person name="Kostelecky B."/>
            <person name="Pohl E."/>
            <person name="Vogel A."/>
            <person name="Schilling O."/>
            <person name="Meyer-Klaucke W."/>
        </authorList>
    </citation>
    <scope>X-RAY CRYSTALLOGRAPHY (2.9 ANGSTROMS) OF 3-305 IN COMPLEX WITH ZINC IONS</scope>
    <scope>SUBUNIT</scope>
</reference>
<evidence type="ECO:0000255" key="1">
    <source>
        <dbReference type="HAMAP-Rule" id="MF_01818"/>
    </source>
</evidence>
<evidence type="ECO:0000269" key="2">
    <source>
    </source>
</evidence>
<evidence type="ECO:0000269" key="3">
    <source>
    </source>
</evidence>
<evidence type="ECO:0000269" key="4">
    <source>
    </source>
</evidence>
<evidence type="ECO:0000269" key="5">
    <source>
    </source>
</evidence>
<evidence type="ECO:0000269" key="6">
    <source>
    </source>
</evidence>
<evidence type="ECO:0000269" key="7">
    <source>
    </source>
</evidence>
<evidence type="ECO:0000305" key="8"/>
<evidence type="ECO:0007829" key="9">
    <source>
        <dbReference type="PDB" id="2CBN"/>
    </source>
</evidence>
<accession>P0A8V0</accession>
<accession>P77449</accession>
<accession>Q47012</accession>
<comment type="function">
    <text evidence="2 3 5 6 7">Zinc phosphodiesterase, which has both exoribonuclease and endoribonuclease activities, depending on the nature of the substrate and of the added divalent cation, and on its 3'-terminal structure. Can process the 3' termini of both CCA-less and CCA-containing tRNA precursors. CCA-less tRNAs are cleaved endonucleolytically after the discriminator base, whereas residues following the CCA sequence can be removed exonucleolytically or endonucleolytically in CCA-containing molecules. Does not remove the CCA sequence. May also be involved in the degradation of mRNAs. In vitro, hydrolyzes bis(p-nitrophenyl)phosphate and thymidine-5'-p-nitrophenyl phosphate.</text>
</comment>
<comment type="cofactor">
    <cofactor evidence="2">
        <name>Zn(2+)</name>
        <dbReference type="ChEBI" id="CHEBI:29105"/>
    </cofactor>
    <text evidence="2">Binds 2 Zn(2+) ions.</text>
</comment>
<comment type="activity regulation">
    <text evidence="3 6 7">Activated by cobalt and manganese. Strongly inhibited by the presence of a 3'-CCA sequence or a 3'-phosphoryl group.</text>
</comment>
<comment type="subunit">
    <text evidence="3 4">Homodimer.</text>
</comment>
<comment type="disruption phenotype">
    <text evidence="3">Mutants are unaffected in growth.</text>
</comment>
<comment type="similarity">
    <text evidence="1 8">Belongs to the RNase Z family. RNase BN subfamily.</text>
</comment>
<comment type="caution">
    <text evidence="8">Was initially thought to be an arylsulfatase, given its similarity with the AtsA family. PubMed:12029081 however showed that it is a zinc phosphodiesterase.</text>
</comment>
<proteinExistence type="evidence at protein level"/>
<organism>
    <name type="scientific">Escherichia coli (strain K12)</name>
    <dbReference type="NCBI Taxonomy" id="83333"/>
    <lineage>
        <taxon>Bacteria</taxon>
        <taxon>Pseudomonadati</taxon>
        <taxon>Pseudomonadota</taxon>
        <taxon>Gammaproteobacteria</taxon>
        <taxon>Enterobacterales</taxon>
        <taxon>Enterobacteriaceae</taxon>
        <taxon>Escherichia</taxon>
    </lineage>
</organism>
<name>RBN_ECOLI</name>
<protein>
    <recommendedName>
        <fullName evidence="1">Ribonuclease BN</fullName>
        <shortName evidence="1">RNase BN</shortName>
        <ecNumber evidence="1">3.1.-.-</ecNumber>
    </recommendedName>
    <alternativeName>
        <fullName evidence="1">Ribonuclease Z homolog</fullName>
        <shortName evidence="1">RNase Z homolog</shortName>
    </alternativeName>
</protein>
<keyword id="KW-0002">3D-structure</keyword>
<keyword id="KW-0255">Endonuclease</keyword>
<keyword id="KW-0269">Exonuclease</keyword>
<keyword id="KW-0378">Hydrolase</keyword>
<keyword id="KW-0479">Metal-binding</keyword>
<keyword id="KW-0540">Nuclease</keyword>
<keyword id="KW-1185">Reference proteome</keyword>
<keyword id="KW-0819">tRNA processing</keyword>
<keyword id="KW-0862">Zinc</keyword>
<dbReference type="EC" id="3.1.-.-" evidence="1"/>
<dbReference type="EMBL" id="U58768">
    <property type="protein sequence ID" value="AAB02732.1"/>
    <property type="molecule type" value="Genomic_DNA"/>
</dbReference>
<dbReference type="EMBL" id="U00096">
    <property type="protein sequence ID" value="AAC75328.2"/>
    <property type="molecule type" value="Genomic_DNA"/>
</dbReference>
<dbReference type="EMBL" id="AP009048">
    <property type="protein sequence ID" value="BAA16095.2"/>
    <property type="molecule type" value="Genomic_DNA"/>
</dbReference>
<dbReference type="PIR" id="B64998">
    <property type="entry name" value="B64998"/>
</dbReference>
<dbReference type="RefSeq" id="NP_416771.4">
    <property type="nucleotide sequence ID" value="NC_000913.3"/>
</dbReference>
<dbReference type="RefSeq" id="WP_001300687.1">
    <property type="nucleotide sequence ID" value="NZ_STEB01000008.1"/>
</dbReference>
<dbReference type="PDB" id="2CBN">
    <property type="method" value="X-ray"/>
    <property type="resolution" value="2.90 A"/>
    <property type="chains" value="A=1-305"/>
</dbReference>
<dbReference type="PDBsum" id="2CBN"/>
<dbReference type="SMR" id="P0A8V0"/>
<dbReference type="BioGRID" id="4263118">
    <property type="interactions" value="41"/>
</dbReference>
<dbReference type="BioGRID" id="851101">
    <property type="interactions" value="1"/>
</dbReference>
<dbReference type="DIP" id="DIP-9498N"/>
<dbReference type="FunCoup" id="P0A8V0">
    <property type="interactions" value="538"/>
</dbReference>
<dbReference type="IntAct" id="P0A8V0">
    <property type="interactions" value="7"/>
</dbReference>
<dbReference type="STRING" id="511145.b2268"/>
<dbReference type="jPOST" id="P0A8V0"/>
<dbReference type="PaxDb" id="511145-b2268"/>
<dbReference type="EnsemblBacteria" id="AAC75328">
    <property type="protein sequence ID" value="AAC75328"/>
    <property type="gene ID" value="b2268"/>
</dbReference>
<dbReference type="GeneID" id="946760"/>
<dbReference type="KEGG" id="ecj:JW2263"/>
<dbReference type="KEGG" id="eco:b2268"/>
<dbReference type="KEGG" id="ecoc:C3026_12665"/>
<dbReference type="PATRIC" id="fig|1411691.4.peg.4468"/>
<dbReference type="EchoBASE" id="EB4008"/>
<dbReference type="eggNOG" id="COG1234">
    <property type="taxonomic scope" value="Bacteria"/>
</dbReference>
<dbReference type="HOGENOM" id="CLU_031317_2_0_6"/>
<dbReference type="InParanoid" id="P0A8V0"/>
<dbReference type="OMA" id="GTQRQMM"/>
<dbReference type="OrthoDB" id="9803916at2"/>
<dbReference type="PhylomeDB" id="P0A8V0"/>
<dbReference type="BioCyc" id="EcoCyc:G7175-MONOMER"/>
<dbReference type="BioCyc" id="MetaCyc:G7175-MONOMER"/>
<dbReference type="BRENDA" id="3.1.26.11">
    <property type="organism ID" value="2026"/>
</dbReference>
<dbReference type="SABIO-RK" id="P0A8V0"/>
<dbReference type="EvolutionaryTrace" id="P0A8V0"/>
<dbReference type="PRO" id="PR:P0A8V0"/>
<dbReference type="Proteomes" id="UP000000625">
    <property type="component" value="Chromosome"/>
</dbReference>
<dbReference type="GO" id="GO:0042781">
    <property type="term" value="F:3'-tRNA processing endoribonuclease activity"/>
    <property type="evidence" value="ECO:0000314"/>
    <property type="project" value="EcoCyc"/>
</dbReference>
<dbReference type="GO" id="GO:0046872">
    <property type="term" value="F:metal ion binding"/>
    <property type="evidence" value="ECO:0000314"/>
    <property type="project" value="EcoCyc"/>
</dbReference>
<dbReference type="GO" id="GO:0004518">
    <property type="term" value="F:nuclease activity"/>
    <property type="evidence" value="ECO:0000314"/>
    <property type="project" value="EcoliWiki"/>
</dbReference>
<dbReference type="GO" id="GO:0042803">
    <property type="term" value="F:protein homodimerization activity"/>
    <property type="evidence" value="ECO:0000353"/>
    <property type="project" value="EcoCyc"/>
</dbReference>
<dbReference type="GO" id="GO:0016891">
    <property type="term" value="F:RNA endonuclease activity, producing 5'-phosphomonoesters"/>
    <property type="evidence" value="ECO:0000314"/>
    <property type="project" value="EcoCyc"/>
</dbReference>
<dbReference type="GO" id="GO:0004532">
    <property type="term" value="F:RNA exonuclease activity"/>
    <property type="evidence" value="ECO:0000314"/>
    <property type="project" value="EcoliWiki"/>
</dbReference>
<dbReference type="GO" id="GO:0016896">
    <property type="term" value="F:RNA exonuclease activity, producing 5'-phosphomonoesters"/>
    <property type="evidence" value="ECO:0000314"/>
    <property type="project" value="EcoCyc"/>
</dbReference>
<dbReference type="GO" id="GO:0008270">
    <property type="term" value="F:zinc ion binding"/>
    <property type="evidence" value="ECO:0007669"/>
    <property type="project" value="UniProtKB-UniRule"/>
</dbReference>
<dbReference type="GO" id="GO:0008033">
    <property type="term" value="P:tRNA processing"/>
    <property type="evidence" value="ECO:0000314"/>
    <property type="project" value="EcoliWiki"/>
</dbReference>
<dbReference type="CDD" id="cd07717">
    <property type="entry name" value="RNaseZ_ZiPD-like_MBL-fold"/>
    <property type="match status" value="1"/>
</dbReference>
<dbReference type="FunFam" id="3.60.15.10:FF:000002">
    <property type="entry name" value="Ribonuclease Z"/>
    <property type="match status" value="1"/>
</dbReference>
<dbReference type="Gene3D" id="3.60.15.10">
    <property type="entry name" value="Ribonuclease Z/Hydroxyacylglutathione hydrolase-like"/>
    <property type="match status" value="1"/>
</dbReference>
<dbReference type="HAMAP" id="MF_01818">
    <property type="entry name" value="RNase_Z_BN"/>
    <property type="match status" value="1"/>
</dbReference>
<dbReference type="InterPro" id="IPR001279">
    <property type="entry name" value="Metallo-B-lactamas"/>
</dbReference>
<dbReference type="InterPro" id="IPR036866">
    <property type="entry name" value="RibonucZ/Hydroxyglut_hydro"/>
</dbReference>
<dbReference type="InterPro" id="IPR013469">
    <property type="entry name" value="Rnase_BN"/>
</dbReference>
<dbReference type="InterPro" id="IPR013471">
    <property type="entry name" value="RNase_Z/BN"/>
</dbReference>
<dbReference type="NCBIfam" id="NF000800">
    <property type="entry name" value="PRK00055.1-1"/>
    <property type="match status" value="1"/>
</dbReference>
<dbReference type="NCBIfam" id="NF000801">
    <property type="entry name" value="PRK00055.1-3"/>
    <property type="match status" value="1"/>
</dbReference>
<dbReference type="NCBIfam" id="TIGR02651">
    <property type="entry name" value="RNase_Z"/>
    <property type="match status" value="1"/>
</dbReference>
<dbReference type="NCBIfam" id="TIGR02649">
    <property type="entry name" value="true_RNase_BN"/>
    <property type="match status" value="1"/>
</dbReference>
<dbReference type="PANTHER" id="PTHR46018">
    <property type="entry name" value="ZINC PHOSPHODIESTERASE ELAC PROTEIN 1"/>
    <property type="match status" value="1"/>
</dbReference>
<dbReference type="PANTHER" id="PTHR46018:SF2">
    <property type="entry name" value="ZINC PHOSPHODIESTERASE ELAC PROTEIN 1"/>
    <property type="match status" value="1"/>
</dbReference>
<dbReference type="Pfam" id="PF12706">
    <property type="entry name" value="Lactamase_B_2"/>
    <property type="match status" value="1"/>
</dbReference>
<dbReference type="SMART" id="SM00849">
    <property type="entry name" value="Lactamase_B"/>
    <property type="match status" value="1"/>
</dbReference>
<dbReference type="SUPFAM" id="SSF56281">
    <property type="entry name" value="Metallo-hydrolase/oxidoreductase"/>
    <property type="match status" value="1"/>
</dbReference>